<reference key="1">
    <citation type="journal article" date="1999" name="Biol. Reprod.">
        <title>The Kruppel-like core promoter binding protein gene is primarily expressed in placenta during mouse development.</title>
        <authorList>
            <person name="Slavin D."/>
            <person name="Sapin V."/>
            <person name="Lopez-Diaz F."/>
            <person name="Jacquemin P."/>
            <person name="Koritschoner N."/>
            <person name="Dastugue B."/>
            <person name="Davidson I."/>
            <person name="Chatton B."/>
            <person name="Bocco J.L."/>
        </authorList>
    </citation>
    <scope>NUCLEOTIDE SEQUENCE [MRNA]</scope>
    <source>
        <strain>Rockefeller</strain>
        <tissue>Placenta</tissue>
    </source>
</reference>
<reference key="2">
    <citation type="journal article" date="2001" name="J. Am. Soc. Nephrol.">
        <title>Klf6 is a zinc finger protein expressed in a cell-specific manner during kidney development.</title>
        <authorList>
            <person name="Fischer E.A."/>
            <person name="Verpont M.C."/>
            <person name="Garrett-Sinha L.A."/>
            <person name="Ronco P.M."/>
            <person name="Rossert J.A."/>
        </authorList>
    </citation>
    <scope>NUCLEOTIDE SEQUENCE [MRNA]</scope>
    <source>
        <strain>Swiss Webster / NIH</strain>
    </source>
</reference>
<organism>
    <name type="scientific">Mus musculus</name>
    <name type="common">Mouse</name>
    <dbReference type="NCBI Taxonomy" id="10090"/>
    <lineage>
        <taxon>Eukaryota</taxon>
        <taxon>Metazoa</taxon>
        <taxon>Chordata</taxon>
        <taxon>Craniata</taxon>
        <taxon>Vertebrata</taxon>
        <taxon>Euteleostomi</taxon>
        <taxon>Mammalia</taxon>
        <taxon>Eutheria</taxon>
        <taxon>Euarchontoglires</taxon>
        <taxon>Glires</taxon>
        <taxon>Rodentia</taxon>
        <taxon>Myomorpha</taxon>
        <taxon>Muroidea</taxon>
        <taxon>Muridae</taxon>
        <taxon>Murinae</taxon>
        <taxon>Mus</taxon>
        <taxon>Mus</taxon>
    </lineage>
</organism>
<proteinExistence type="evidence at transcript level"/>
<protein>
    <recommendedName>
        <fullName>Krueppel-like factor 6</fullName>
    </recommendedName>
    <alternativeName>
        <fullName>Core promoter element-binding protein</fullName>
    </alternativeName>
</protein>
<feature type="chain" id="PRO_0000047172" description="Krueppel-like factor 6">
    <location>
        <begin position="1"/>
        <end position="283"/>
    </location>
</feature>
<feature type="zinc finger region" description="C2H2-type 1" evidence="3">
    <location>
        <begin position="200"/>
        <end position="224"/>
    </location>
</feature>
<feature type="zinc finger region" description="C2H2-type 2" evidence="3">
    <location>
        <begin position="230"/>
        <end position="254"/>
    </location>
</feature>
<feature type="zinc finger region" description="C2H2-type 3" evidence="3">
    <location>
        <begin position="260"/>
        <end position="282"/>
    </location>
</feature>
<feature type="region of interest" description="Disordered" evidence="4">
    <location>
        <begin position="104"/>
        <end position="198"/>
    </location>
</feature>
<feature type="short sequence motif" description="9aaTAD; inactive" evidence="2">
    <location>
        <begin position="62"/>
        <end position="70"/>
    </location>
</feature>
<feature type="compositionally biased region" description="Low complexity" evidence="4">
    <location>
        <begin position="104"/>
        <end position="113"/>
    </location>
</feature>
<feature type="compositionally biased region" description="Low complexity" evidence="4">
    <location>
        <begin position="133"/>
        <end position="148"/>
    </location>
</feature>
<feature type="compositionally biased region" description="Basic and acidic residues" evidence="4">
    <location>
        <begin position="183"/>
        <end position="196"/>
    </location>
</feature>
<accession>O08584</accession>
<keyword id="KW-0010">Activator</keyword>
<keyword id="KW-0238">DNA-binding</keyword>
<keyword id="KW-0479">Metal-binding</keyword>
<keyword id="KW-0539">Nucleus</keyword>
<keyword id="KW-1185">Reference proteome</keyword>
<keyword id="KW-0677">Repeat</keyword>
<keyword id="KW-0804">Transcription</keyword>
<keyword id="KW-0805">Transcription regulation</keyword>
<keyword id="KW-0862">Zinc</keyword>
<keyword id="KW-0863">Zinc-finger</keyword>
<comment type="function">
    <text evidence="1">Transcriptional activator. Binds a GC box motif. Could play a role in B-cell growth and development (By similarity).</text>
</comment>
<comment type="subunit">
    <text evidence="2">Interacts with ZZEF1.</text>
</comment>
<comment type="subcellular location">
    <subcellularLocation>
        <location evidence="1">Nucleus</location>
    </subcellularLocation>
</comment>
<comment type="tissue specificity">
    <text>Highly expressed in placenta.</text>
</comment>
<comment type="developmental stage">
    <text>Expression is lower in total embryos and in adult tissues.</text>
</comment>
<comment type="domain">
    <text>The acidic N-terminal part may favor interaction with the basic domain of transcription factors.</text>
</comment>
<comment type="domain">
    <text evidence="2">The 9aaTAD motif is a transactivation domain present in a large number of yeast and animal transcription factors. In KLF6, the motif is inactive.</text>
</comment>
<comment type="similarity">
    <text evidence="5">Belongs to the krueppel C2H2-type zinc-finger protein family.</text>
</comment>
<comment type="sequence caution" evidence="5">
    <conflict type="erroneous initiation">
        <sequence resource="EMBL-CDS" id="AAC99478"/>
    </conflict>
</comment>
<sequence length="283" mass="31877">MDVLPMCSIFQELQIVHETGYFSALPSLEEYWQQTCLELERYLQSEPCYVSASEIKFDSQEDLWTKFILAREKKEESELKISSSPPEDSLISSSFNYNLETNSLNSDVSSESSDSSEELSPTTKFTSDPIGEVLVNSGNLSSSVISTPPSSPEVNRESSQLWGCGPGDLPSPGKVRSGTSGKSGDKGNGDASPDGRRRVHRCHFNGCRKVYTKSSHLKAHQRTHTGEKPYRCSWEGCEWRFARSDELTRHFRKHTGAKPFKCSHCDRCFSRSDHLALHMKRHL</sequence>
<evidence type="ECO:0000250" key="1"/>
<evidence type="ECO:0000250" key="2">
    <source>
        <dbReference type="UniProtKB" id="Q99612"/>
    </source>
</evidence>
<evidence type="ECO:0000255" key="3">
    <source>
        <dbReference type="PROSITE-ProRule" id="PRU00042"/>
    </source>
</evidence>
<evidence type="ECO:0000256" key="4">
    <source>
        <dbReference type="SAM" id="MobiDB-lite"/>
    </source>
</evidence>
<evidence type="ECO:0000305" key="5"/>
<gene>
    <name type="primary">Klf6</name>
    <name type="synonym">Copeb</name>
    <name type="synonym">Cpbp</name>
</gene>
<name>KLF6_MOUSE</name>
<dbReference type="EMBL" id="AF072403">
    <property type="protein sequence ID" value="AAC99478.1"/>
    <property type="status" value="ALT_INIT"/>
    <property type="molecule type" value="mRNA"/>
</dbReference>
<dbReference type="EMBL" id="AY027436">
    <property type="protein sequence ID" value="AAK11733.1"/>
    <property type="molecule type" value="mRNA"/>
</dbReference>
<dbReference type="SMR" id="O08584"/>
<dbReference type="FunCoup" id="O08584">
    <property type="interactions" value="2425"/>
</dbReference>
<dbReference type="STRING" id="10090.ENSMUSP00000000080"/>
<dbReference type="iPTMnet" id="O08584"/>
<dbReference type="PhosphoSitePlus" id="O08584"/>
<dbReference type="PaxDb" id="10090-ENSMUSP00000000080"/>
<dbReference type="ProteomicsDB" id="263620"/>
<dbReference type="AGR" id="MGI:1346318"/>
<dbReference type="MGI" id="MGI:1346318">
    <property type="gene designation" value="Klf6"/>
</dbReference>
<dbReference type="eggNOG" id="KOG1721">
    <property type="taxonomic scope" value="Eukaryota"/>
</dbReference>
<dbReference type="InParanoid" id="O08584"/>
<dbReference type="PhylomeDB" id="O08584"/>
<dbReference type="ChiTaRS" id="Klf6">
    <property type="organism name" value="mouse"/>
</dbReference>
<dbReference type="PRO" id="PR:O08584"/>
<dbReference type="Proteomes" id="UP000000589">
    <property type="component" value="Unplaced"/>
</dbReference>
<dbReference type="RNAct" id="O08584">
    <property type="molecule type" value="protein"/>
</dbReference>
<dbReference type="GO" id="GO:0005737">
    <property type="term" value="C:cytoplasm"/>
    <property type="evidence" value="ECO:0000314"/>
    <property type="project" value="MGI"/>
</dbReference>
<dbReference type="GO" id="GO:0005634">
    <property type="term" value="C:nucleus"/>
    <property type="evidence" value="ECO:0000314"/>
    <property type="project" value="MGI"/>
</dbReference>
<dbReference type="GO" id="GO:0003677">
    <property type="term" value="F:DNA binding"/>
    <property type="evidence" value="ECO:0000250"/>
    <property type="project" value="MGI"/>
</dbReference>
<dbReference type="GO" id="GO:0008270">
    <property type="term" value="F:zinc ion binding"/>
    <property type="evidence" value="ECO:0007669"/>
    <property type="project" value="UniProtKB-KW"/>
</dbReference>
<dbReference type="GO" id="GO:0019221">
    <property type="term" value="P:cytokine-mediated signaling pathway"/>
    <property type="evidence" value="ECO:0000314"/>
    <property type="project" value="MGI"/>
</dbReference>
<dbReference type="GO" id="GO:1905205">
    <property type="term" value="P:positive regulation of connective tissue replacement"/>
    <property type="evidence" value="ECO:0000315"/>
    <property type="project" value="BHF-UCL"/>
</dbReference>
<dbReference type="CDD" id="cd21586">
    <property type="entry name" value="KLF6_N"/>
    <property type="match status" value="1"/>
</dbReference>
<dbReference type="FunFam" id="3.30.160.60:FF:000021">
    <property type="entry name" value="Basic krueppel-like factor 3"/>
    <property type="match status" value="1"/>
</dbReference>
<dbReference type="FunFam" id="3.30.160.60:FF:000018">
    <property type="entry name" value="Krueppel-like factor 15"/>
    <property type="match status" value="1"/>
</dbReference>
<dbReference type="FunFam" id="3.30.160.60:FF:000624">
    <property type="entry name" value="zinc finger protein 697"/>
    <property type="match status" value="1"/>
</dbReference>
<dbReference type="Gene3D" id="3.30.160.60">
    <property type="entry name" value="Classic Zinc Finger"/>
    <property type="match status" value="3"/>
</dbReference>
<dbReference type="InterPro" id="IPR036236">
    <property type="entry name" value="Znf_C2H2_sf"/>
</dbReference>
<dbReference type="InterPro" id="IPR013087">
    <property type="entry name" value="Znf_C2H2_type"/>
</dbReference>
<dbReference type="PANTHER" id="PTHR23235:SF50">
    <property type="entry name" value="KRUEPPEL-LIKE FACTOR 6"/>
    <property type="match status" value="1"/>
</dbReference>
<dbReference type="PANTHER" id="PTHR23235">
    <property type="entry name" value="KRUEPPEL-LIKE TRANSCRIPTION FACTOR"/>
    <property type="match status" value="1"/>
</dbReference>
<dbReference type="Pfam" id="PF00096">
    <property type="entry name" value="zf-C2H2"/>
    <property type="match status" value="3"/>
</dbReference>
<dbReference type="SMART" id="SM00355">
    <property type="entry name" value="ZnF_C2H2"/>
    <property type="match status" value="3"/>
</dbReference>
<dbReference type="SUPFAM" id="SSF57667">
    <property type="entry name" value="beta-beta-alpha zinc fingers"/>
    <property type="match status" value="2"/>
</dbReference>
<dbReference type="PROSITE" id="PS00028">
    <property type="entry name" value="ZINC_FINGER_C2H2_1"/>
    <property type="match status" value="3"/>
</dbReference>
<dbReference type="PROSITE" id="PS50157">
    <property type="entry name" value="ZINC_FINGER_C2H2_2"/>
    <property type="match status" value="3"/>
</dbReference>